<reference key="1">
    <citation type="journal article" date="1990" name="FEBS Lett.">
        <title>Isolation and sequence of a tropomyosin-binding fragment of turkey gizzard calponin.</title>
        <authorList>
            <person name="Vancompernolle K."/>
            <person name="Gimona M."/>
            <person name="Herzog M."/>
            <person name="van Damme J."/>
            <person name="Vandekerckhove J."/>
            <person name="Small V."/>
        </authorList>
    </citation>
    <scope>PROTEIN SEQUENCE</scope>
    <source>
        <tissue>Gizzard</tissue>
    </source>
</reference>
<accession>P37803</accession>
<sequence>NRGPAYGLSAEVKNKLAQKYDPQTERQLRVWIEGATGRRIGDNFXDGLKDGVILMELINKLQPGSVQKVNDPVQNWHKLENIGNFLRAIKHYGVKPHDIFEANDLFENTNHTQVQSTLIALASQAKTKGNNVGLGVKYAEKQQRRFQPEKLREGRNIIGLQMGTNKFASQQGMTAY</sequence>
<organism>
    <name type="scientific">Meleagris gallopavo</name>
    <name type="common">Wild turkey</name>
    <dbReference type="NCBI Taxonomy" id="9103"/>
    <lineage>
        <taxon>Eukaryota</taxon>
        <taxon>Metazoa</taxon>
        <taxon>Chordata</taxon>
        <taxon>Craniata</taxon>
        <taxon>Vertebrata</taxon>
        <taxon>Euteleostomi</taxon>
        <taxon>Archelosauria</taxon>
        <taxon>Archosauria</taxon>
        <taxon>Dinosauria</taxon>
        <taxon>Saurischia</taxon>
        <taxon>Theropoda</taxon>
        <taxon>Coelurosauria</taxon>
        <taxon>Aves</taxon>
        <taxon>Neognathae</taxon>
        <taxon>Galloanserae</taxon>
        <taxon>Galliformes</taxon>
        <taxon>Phasianidae</taxon>
        <taxon>Meleagridinae</taxon>
        <taxon>Meleagris</taxon>
    </lineage>
</organism>
<dbReference type="PIR" id="S12914">
    <property type="entry name" value="S12914"/>
</dbReference>
<dbReference type="BMRB" id="P37803"/>
<dbReference type="FunCoup" id="P37803">
    <property type="interactions" value="330"/>
</dbReference>
<dbReference type="InParanoid" id="P37803"/>
<dbReference type="Proteomes" id="UP000001645">
    <property type="component" value="Unplaced"/>
</dbReference>
<dbReference type="GO" id="GO:0015629">
    <property type="term" value="C:actin cytoskeleton"/>
    <property type="evidence" value="ECO:0007669"/>
    <property type="project" value="TreeGrafter"/>
</dbReference>
<dbReference type="GO" id="GO:0005925">
    <property type="term" value="C:focal adhesion"/>
    <property type="evidence" value="ECO:0007669"/>
    <property type="project" value="TreeGrafter"/>
</dbReference>
<dbReference type="GO" id="GO:0051015">
    <property type="term" value="F:actin filament binding"/>
    <property type="evidence" value="ECO:0007669"/>
    <property type="project" value="TreeGrafter"/>
</dbReference>
<dbReference type="GO" id="GO:0005516">
    <property type="term" value="F:calmodulin binding"/>
    <property type="evidence" value="ECO:0007669"/>
    <property type="project" value="UniProtKB-KW"/>
</dbReference>
<dbReference type="GO" id="GO:0007015">
    <property type="term" value="P:actin filament organization"/>
    <property type="evidence" value="ECO:0007669"/>
    <property type="project" value="TreeGrafter"/>
</dbReference>
<dbReference type="GO" id="GO:0031032">
    <property type="term" value="P:actomyosin structure organization"/>
    <property type="evidence" value="ECO:0007669"/>
    <property type="project" value="InterPro"/>
</dbReference>
<dbReference type="Gene3D" id="1.10.418.10">
    <property type="entry name" value="Calponin-like domain"/>
    <property type="match status" value="1"/>
</dbReference>
<dbReference type="InterPro" id="IPR050606">
    <property type="entry name" value="Calponin-like"/>
</dbReference>
<dbReference type="InterPro" id="IPR001997">
    <property type="entry name" value="Calponin/LIMCH1"/>
</dbReference>
<dbReference type="InterPro" id="IPR000557">
    <property type="entry name" value="Calponin_repeat"/>
</dbReference>
<dbReference type="InterPro" id="IPR001715">
    <property type="entry name" value="CH_dom"/>
</dbReference>
<dbReference type="InterPro" id="IPR036872">
    <property type="entry name" value="CH_dom_sf"/>
</dbReference>
<dbReference type="InterPro" id="IPR003096">
    <property type="entry name" value="SM22_calponin"/>
</dbReference>
<dbReference type="PANTHER" id="PTHR47385">
    <property type="entry name" value="CALPONIN"/>
    <property type="match status" value="1"/>
</dbReference>
<dbReference type="PANTHER" id="PTHR47385:SF12">
    <property type="entry name" value="CALPONIN-1"/>
    <property type="match status" value="1"/>
</dbReference>
<dbReference type="Pfam" id="PF00402">
    <property type="entry name" value="Calponin"/>
    <property type="match status" value="1"/>
</dbReference>
<dbReference type="Pfam" id="PF00307">
    <property type="entry name" value="CH"/>
    <property type="match status" value="1"/>
</dbReference>
<dbReference type="PRINTS" id="PR00889">
    <property type="entry name" value="CALPONIN"/>
</dbReference>
<dbReference type="PRINTS" id="PR00888">
    <property type="entry name" value="SM22CALPONIN"/>
</dbReference>
<dbReference type="SMART" id="SM00033">
    <property type="entry name" value="CH"/>
    <property type="match status" value="1"/>
</dbReference>
<dbReference type="SUPFAM" id="SSF47576">
    <property type="entry name" value="Calponin-homology domain, CH-domain"/>
    <property type="match status" value="1"/>
</dbReference>
<dbReference type="PROSITE" id="PS51122">
    <property type="entry name" value="CALPONIN_2"/>
    <property type="match status" value="1"/>
</dbReference>
<dbReference type="PROSITE" id="PS50021">
    <property type="entry name" value="CH"/>
    <property type="match status" value="1"/>
</dbReference>
<keyword id="KW-0009">Actin-binding</keyword>
<keyword id="KW-0112">Calmodulin-binding</keyword>
<keyword id="KW-0903">Direct protein sequencing</keyword>
<keyword id="KW-0597">Phosphoprotein</keyword>
<keyword id="KW-1185">Reference proteome</keyword>
<keyword id="KW-0677">Repeat</keyword>
<protein>
    <recommendedName>
        <fullName>Calponin-1</fullName>
    </recommendedName>
    <alternativeName>
        <fullName>Calponin, smooth muscle</fullName>
    </alternativeName>
</protein>
<comment type="function">
    <text>Thin filament-associated protein that is implicated in the regulation and modulation of smooth muscle contraction. It is capable of binding to actin, calmodulin and tropomyosin. The interaction of calponin with actin inhibits the actomyosin Mg-ATPase activity.</text>
</comment>
<comment type="tissue specificity">
    <text>Smooth muscle, and tissues containing significant amounts of smooth muscle.</text>
</comment>
<comment type="similarity">
    <text evidence="3">Belongs to the calponin family.</text>
</comment>
<evidence type="ECO:0000250" key="1"/>
<evidence type="ECO:0000255" key="2">
    <source>
        <dbReference type="PROSITE-ProRule" id="PRU00044"/>
    </source>
</evidence>
<evidence type="ECO:0000305" key="3"/>
<gene>
    <name type="primary">CNN1</name>
</gene>
<name>CNN1_MELGA</name>
<proteinExistence type="evidence at protein level"/>
<feature type="chain" id="PRO_0000204772" description="Calponin-1">
    <location>
        <begin position="1" status="less than"/>
        <end position="176" status="greater than"/>
    </location>
</feature>
<feature type="domain" description="Calponin-homology (CH)" evidence="2">
    <location>
        <begin position="22"/>
        <end position="125"/>
    </location>
</feature>
<feature type="repeat" description="Calponin-like">
    <location>
        <begin position="158"/>
        <end position="176" status="greater than"/>
    </location>
</feature>
<feature type="modified residue" description="Phosphothreonine; by ROCK2" evidence="1">
    <location>
        <position position="164"/>
    </location>
</feature>
<feature type="modified residue" description="Phosphoserine; by ROCK2" evidence="1">
    <location>
        <position position="169"/>
    </location>
</feature>
<feature type="modified residue" description="Phosphothreonine; by ROCK2" evidence="1">
    <location>
        <position position="174"/>
    </location>
</feature>
<feature type="non-terminal residue">
    <location>
        <position position="1"/>
    </location>
</feature>
<feature type="non-terminal residue">
    <location>
        <position position="176"/>
    </location>
</feature>